<reference key="1">
    <citation type="journal article" date="2004" name="Nature">
        <title>Genome evolution in yeasts.</title>
        <authorList>
            <person name="Dujon B."/>
            <person name="Sherman D."/>
            <person name="Fischer G."/>
            <person name="Durrens P."/>
            <person name="Casaregola S."/>
            <person name="Lafontaine I."/>
            <person name="de Montigny J."/>
            <person name="Marck C."/>
            <person name="Neuveglise C."/>
            <person name="Talla E."/>
            <person name="Goffard N."/>
            <person name="Frangeul L."/>
            <person name="Aigle M."/>
            <person name="Anthouard V."/>
            <person name="Babour A."/>
            <person name="Barbe V."/>
            <person name="Barnay S."/>
            <person name="Blanchin S."/>
            <person name="Beckerich J.-M."/>
            <person name="Beyne E."/>
            <person name="Bleykasten C."/>
            <person name="Boisrame A."/>
            <person name="Boyer J."/>
            <person name="Cattolico L."/>
            <person name="Confanioleri F."/>
            <person name="de Daruvar A."/>
            <person name="Despons L."/>
            <person name="Fabre E."/>
            <person name="Fairhead C."/>
            <person name="Ferry-Dumazet H."/>
            <person name="Groppi A."/>
            <person name="Hantraye F."/>
            <person name="Hennequin C."/>
            <person name="Jauniaux N."/>
            <person name="Joyet P."/>
            <person name="Kachouri R."/>
            <person name="Kerrest A."/>
            <person name="Koszul R."/>
            <person name="Lemaire M."/>
            <person name="Lesur I."/>
            <person name="Ma L."/>
            <person name="Muller H."/>
            <person name="Nicaud J.-M."/>
            <person name="Nikolski M."/>
            <person name="Oztas S."/>
            <person name="Ozier-Kalogeropoulos O."/>
            <person name="Pellenz S."/>
            <person name="Potier S."/>
            <person name="Richard G.-F."/>
            <person name="Straub M.-L."/>
            <person name="Suleau A."/>
            <person name="Swennen D."/>
            <person name="Tekaia F."/>
            <person name="Wesolowski-Louvel M."/>
            <person name="Westhof E."/>
            <person name="Wirth B."/>
            <person name="Zeniou-Meyer M."/>
            <person name="Zivanovic Y."/>
            <person name="Bolotin-Fukuhara M."/>
            <person name="Thierry A."/>
            <person name="Bouchier C."/>
            <person name="Caudron B."/>
            <person name="Scarpelli C."/>
            <person name="Gaillardin C."/>
            <person name="Weissenbach J."/>
            <person name="Wincker P."/>
            <person name="Souciet J.-L."/>
        </authorList>
    </citation>
    <scope>NUCLEOTIDE SEQUENCE [LARGE SCALE GENOMIC DNA]</scope>
    <source>
        <strain>ATCC 36239 / CBS 767 / BCRC 21394 / JCM 1990 / NBRC 0083 / IGC 2968</strain>
    </source>
</reference>
<sequence>MAPKRHLGLGKAAKSKKQKKDDSSEVENPVQQSNELTVELNEEVDANDEVSQLRALWKTHAKSDKDNELVVNGIIHECDRLLRNSNLAENEDGEDKNKASTNEDGPKELPADFHSIYALALADLALFHSTDVNKVKEFFDAALERVDLGLQSHTGSIELLFTKSRILINQIPLQYISQLTVESKVQDGVPKIDEKLDAALKIYEEAENQAKALKQYELFNEDNLEILQAFDDLLEIVDNFGKDNSEGDESDKEDDGDYEEEIQLSKKHPLYGIRNTDKYNEWWRDHTIQFLQNVDQQLEKLGISYKQENETENALLPLRREICKRIGQSYLQEAEIPSTVFTTLKYDEGFADVDQLEGLTRDESQKISQYLFKTALDYLKMAEDKEEPESWVNIAESMISLGNLYELDSEEQENYYTEAEKILTKANNATNGKYEDILENLQT</sequence>
<gene>
    <name type="primary">ETT1</name>
    <name type="ordered locus">DEHA2E07106g</name>
</gene>
<proteinExistence type="inferred from homology"/>
<organism>
    <name type="scientific">Debaryomyces hansenii (strain ATCC 36239 / CBS 767 / BCRC 21394 / JCM 1990 / NBRC 0083 / IGC 2968)</name>
    <name type="common">Yeast</name>
    <name type="synonym">Torulaspora hansenii</name>
    <dbReference type="NCBI Taxonomy" id="284592"/>
    <lineage>
        <taxon>Eukaryota</taxon>
        <taxon>Fungi</taxon>
        <taxon>Dikarya</taxon>
        <taxon>Ascomycota</taxon>
        <taxon>Saccharomycotina</taxon>
        <taxon>Pichiomycetes</taxon>
        <taxon>Debaryomycetaceae</taxon>
        <taxon>Debaryomyces</taxon>
    </lineage>
</organism>
<keyword id="KW-0539">Nucleus</keyword>
<keyword id="KW-1185">Reference proteome</keyword>
<keyword id="KW-0804">Transcription</keyword>
<keyword id="KW-0805">Transcription regulation</keyword>
<keyword id="KW-0810">Translation regulation</keyword>
<protein>
    <recommendedName>
        <fullName>Enhancer of translation termination 1</fullName>
    </recommendedName>
</protein>
<name>ETT1_DEBHA</name>
<feature type="chain" id="PRO_0000406616" description="Enhancer of translation termination 1">
    <location>
        <begin position="1"/>
        <end position="443"/>
    </location>
</feature>
<feature type="region of interest" description="Disordered" evidence="2">
    <location>
        <begin position="1"/>
        <end position="44"/>
    </location>
</feature>
<feature type="region of interest" description="Disordered" evidence="2">
    <location>
        <begin position="86"/>
        <end position="107"/>
    </location>
</feature>
<feature type="region of interest" description="Disordered" evidence="2">
    <location>
        <begin position="241"/>
        <end position="261"/>
    </location>
</feature>
<feature type="compositionally biased region" description="Basic residues" evidence="2">
    <location>
        <begin position="1"/>
        <end position="18"/>
    </location>
</feature>
<feature type="compositionally biased region" description="Acidic residues" evidence="2">
    <location>
        <begin position="246"/>
        <end position="261"/>
    </location>
</feature>
<dbReference type="EMBL" id="CR382137">
    <property type="protein sequence ID" value="CAR65777.1"/>
    <property type="molecule type" value="Genomic_DNA"/>
</dbReference>
<dbReference type="RefSeq" id="XP_002770431.1">
    <property type="nucleotide sequence ID" value="XM_002770385.1"/>
</dbReference>
<dbReference type="SMR" id="B5RTW5"/>
<dbReference type="FunCoup" id="B5RTW5">
    <property type="interactions" value="118"/>
</dbReference>
<dbReference type="STRING" id="284592.B5RTW5"/>
<dbReference type="GeneID" id="8998689"/>
<dbReference type="KEGG" id="dha:DEHA2E07106g"/>
<dbReference type="VEuPathDB" id="FungiDB:DEHA2E07106g"/>
<dbReference type="eggNOG" id="ENOG502QPHX">
    <property type="taxonomic scope" value="Eukaryota"/>
</dbReference>
<dbReference type="HOGENOM" id="CLU_050427_0_0_1"/>
<dbReference type="InParanoid" id="B5RTW5"/>
<dbReference type="OMA" id="GIVHECD"/>
<dbReference type="OrthoDB" id="5598057at2759"/>
<dbReference type="Proteomes" id="UP000000599">
    <property type="component" value="Chromosome E"/>
</dbReference>
<dbReference type="GO" id="GO:0005634">
    <property type="term" value="C:nucleus"/>
    <property type="evidence" value="ECO:0007669"/>
    <property type="project" value="UniProtKB-SubCell"/>
</dbReference>
<dbReference type="GO" id="GO:2000640">
    <property type="term" value="P:positive regulation of SREBP signaling pathway"/>
    <property type="evidence" value="ECO:0007669"/>
    <property type="project" value="TreeGrafter"/>
</dbReference>
<dbReference type="GO" id="GO:0006417">
    <property type="term" value="P:regulation of translation"/>
    <property type="evidence" value="ECO:0007669"/>
    <property type="project" value="UniProtKB-KW"/>
</dbReference>
<dbReference type="InterPro" id="IPR024318">
    <property type="entry name" value="Nro1/ETT1"/>
</dbReference>
<dbReference type="PANTHER" id="PTHR28290">
    <property type="entry name" value="ENHANCER OF TRANSLATION TERMINATION 1"/>
    <property type="match status" value="1"/>
</dbReference>
<dbReference type="PANTHER" id="PTHR28290:SF1">
    <property type="entry name" value="ENHANCER OF TRANSLATION TERMINATION 1"/>
    <property type="match status" value="1"/>
</dbReference>
<dbReference type="Pfam" id="PF12753">
    <property type="entry name" value="Nro1"/>
    <property type="match status" value="1"/>
</dbReference>
<accession>B5RTW5</accession>
<evidence type="ECO:0000250" key="1"/>
<evidence type="ECO:0000256" key="2">
    <source>
        <dbReference type="SAM" id="MobiDB-lite"/>
    </source>
</evidence>
<evidence type="ECO:0000305" key="3"/>
<comment type="function">
    <text evidence="1">Required for correct translation termination and probably involved in regulation of hypoxic gene expression.</text>
</comment>
<comment type="subcellular location">
    <subcellularLocation>
        <location evidence="1">Nucleus</location>
    </subcellularLocation>
</comment>
<comment type="similarity">
    <text evidence="3">Belongs to the ETT1 family.</text>
</comment>